<name>EFP_WOLSU</name>
<evidence type="ECO:0000255" key="1">
    <source>
        <dbReference type="HAMAP-Rule" id="MF_00141"/>
    </source>
</evidence>
<accession>Q7M904</accession>
<keyword id="KW-0963">Cytoplasm</keyword>
<keyword id="KW-0251">Elongation factor</keyword>
<keyword id="KW-0648">Protein biosynthesis</keyword>
<keyword id="KW-1185">Reference proteome</keyword>
<gene>
    <name evidence="1" type="primary">efp</name>
    <name type="ordered locus">WS1279</name>
</gene>
<comment type="function">
    <text evidence="1">Involved in peptide bond synthesis. Stimulates efficient translation and peptide-bond synthesis on native or reconstituted 70S ribosomes in vitro. Probably functions indirectly by altering the affinity of the ribosome for aminoacyl-tRNA, thus increasing their reactivity as acceptors for peptidyl transferase.</text>
</comment>
<comment type="pathway">
    <text evidence="1">Protein biosynthesis; polypeptide chain elongation.</text>
</comment>
<comment type="subcellular location">
    <subcellularLocation>
        <location evidence="1">Cytoplasm</location>
    </subcellularLocation>
</comment>
<comment type="similarity">
    <text evidence="1">Belongs to the elongation factor P family.</text>
</comment>
<sequence>MAYSMSDLKKGLKVEIEGVPYKIVEYQHVKPGKGAAFVRVKMKSFFDGRVLEKTFHAGDKCEEPNLQEKNMQYLYHDGDHFQFMDVESYEQIALSDEQVGDVAKWMTDGMTVSILFHNNKAISVDVPQVVELKITETPPNFKGDTSSGSKKPATLETGAVIQIPYHVLEGDVVRVNTELGEYIEKVK</sequence>
<protein>
    <recommendedName>
        <fullName evidence="1">Elongation factor P</fullName>
        <shortName evidence="1">EF-P</shortName>
    </recommendedName>
</protein>
<proteinExistence type="inferred from homology"/>
<dbReference type="EMBL" id="BX571660">
    <property type="protein sequence ID" value="CAE10358.1"/>
    <property type="molecule type" value="Genomic_DNA"/>
</dbReference>
<dbReference type="RefSeq" id="WP_011139144.1">
    <property type="nucleotide sequence ID" value="NC_005090.1"/>
</dbReference>
<dbReference type="SMR" id="Q7M904"/>
<dbReference type="STRING" id="273121.WS1279"/>
<dbReference type="KEGG" id="wsu:WS1279"/>
<dbReference type="eggNOG" id="COG0231">
    <property type="taxonomic scope" value="Bacteria"/>
</dbReference>
<dbReference type="HOGENOM" id="CLU_074944_0_1_7"/>
<dbReference type="UniPathway" id="UPA00345"/>
<dbReference type="Proteomes" id="UP000000422">
    <property type="component" value="Chromosome"/>
</dbReference>
<dbReference type="GO" id="GO:0005737">
    <property type="term" value="C:cytoplasm"/>
    <property type="evidence" value="ECO:0007669"/>
    <property type="project" value="UniProtKB-SubCell"/>
</dbReference>
<dbReference type="GO" id="GO:0003746">
    <property type="term" value="F:translation elongation factor activity"/>
    <property type="evidence" value="ECO:0007669"/>
    <property type="project" value="UniProtKB-UniRule"/>
</dbReference>
<dbReference type="GO" id="GO:0043043">
    <property type="term" value="P:peptide biosynthetic process"/>
    <property type="evidence" value="ECO:0007669"/>
    <property type="project" value="InterPro"/>
</dbReference>
<dbReference type="CDD" id="cd04470">
    <property type="entry name" value="S1_EF-P_repeat_1"/>
    <property type="match status" value="1"/>
</dbReference>
<dbReference type="CDD" id="cd05794">
    <property type="entry name" value="S1_EF-P_repeat_2"/>
    <property type="match status" value="1"/>
</dbReference>
<dbReference type="FunFam" id="2.30.30.30:FF:000003">
    <property type="entry name" value="Elongation factor P"/>
    <property type="match status" value="1"/>
</dbReference>
<dbReference type="FunFam" id="2.40.50.140:FF:000004">
    <property type="entry name" value="Elongation factor P"/>
    <property type="match status" value="1"/>
</dbReference>
<dbReference type="FunFam" id="2.40.50.140:FF:000009">
    <property type="entry name" value="Elongation factor P"/>
    <property type="match status" value="1"/>
</dbReference>
<dbReference type="Gene3D" id="2.30.30.30">
    <property type="match status" value="1"/>
</dbReference>
<dbReference type="Gene3D" id="2.40.50.140">
    <property type="entry name" value="Nucleic acid-binding proteins"/>
    <property type="match status" value="2"/>
</dbReference>
<dbReference type="HAMAP" id="MF_00141">
    <property type="entry name" value="EF_P"/>
    <property type="match status" value="1"/>
</dbReference>
<dbReference type="InterPro" id="IPR015365">
    <property type="entry name" value="Elong-fact-P_C"/>
</dbReference>
<dbReference type="InterPro" id="IPR012340">
    <property type="entry name" value="NA-bd_OB-fold"/>
</dbReference>
<dbReference type="InterPro" id="IPR014722">
    <property type="entry name" value="Rib_uL2_dom2"/>
</dbReference>
<dbReference type="InterPro" id="IPR020599">
    <property type="entry name" value="Transl_elong_fac_P/YeiP"/>
</dbReference>
<dbReference type="InterPro" id="IPR013185">
    <property type="entry name" value="Transl_elong_KOW-like"/>
</dbReference>
<dbReference type="InterPro" id="IPR001059">
    <property type="entry name" value="Transl_elong_P/YeiP_cen"/>
</dbReference>
<dbReference type="InterPro" id="IPR011768">
    <property type="entry name" value="Transl_elongation_fac_P"/>
</dbReference>
<dbReference type="InterPro" id="IPR008991">
    <property type="entry name" value="Translation_prot_SH3-like_sf"/>
</dbReference>
<dbReference type="NCBIfam" id="TIGR00038">
    <property type="entry name" value="efp"/>
    <property type="match status" value="1"/>
</dbReference>
<dbReference type="NCBIfam" id="NF001810">
    <property type="entry name" value="PRK00529.1"/>
    <property type="match status" value="1"/>
</dbReference>
<dbReference type="PANTHER" id="PTHR30053">
    <property type="entry name" value="ELONGATION FACTOR P"/>
    <property type="match status" value="1"/>
</dbReference>
<dbReference type="PANTHER" id="PTHR30053:SF12">
    <property type="entry name" value="ELONGATION FACTOR P (EF-P) FAMILY PROTEIN"/>
    <property type="match status" value="1"/>
</dbReference>
<dbReference type="Pfam" id="PF01132">
    <property type="entry name" value="EFP"/>
    <property type="match status" value="1"/>
</dbReference>
<dbReference type="Pfam" id="PF08207">
    <property type="entry name" value="EFP_N"/>
    <property type="match status" value="1"/>
</dbReference>
<dbReference type="Pfam" id="PF09285">
    <property type="entry name" value="Elong-fact-P_C"/>
    <property type="match status" value="1"/>
</dbReference>
<dbReference type="PIRSF" id="PIRSF005901">
    <property type="entry name" value="EF-P"/>
    <property type="match status" value="1"/>
</dbReference>
<dbReference type="SMART" id="SM01185">
    <property type="entry name" value="EFP"/>
    <property type="match status" value="1"/>
</dbReference>
<dbReference type="SMART" id="SM00841">
    <property type="entry name" value="Elong-fact-P_C"/>
    <property type="match status" value="1"/>
</dbReference>
<dbReference type="SUPFAM" id="SSF50249">
    <property type="entry name" value="Nucleic acid-binding proteins"/>
    <property type="match status" value="2"/>
</dbReference>
<dbReference type="SUPFAM" id="SSF50104">
    <property type="entry name" value="Translation proteins SH3-like domain"/>
    <property type="match status" value="1"/>
</dbReference>
<organism>
    <name type="scientific">Wolinella succinogenes (strain ATCC 29543 / DSM 1740 / CCUG 13145 / JCM 31913 / LMG 7466 / NCTC 11488 / FDC 602W)</name>
    <name type="common">Vibrio succinogenes</name>
    <dbReference type="NCBI Taxonomy" id="273121"/>
    <lineage>
        <taxon>Bacteria</taxon>
        <taxon>Pseudomonadati</taxon>
        <taxon>Campylobacterota</taxon>
        <taxon>Epsilonproteobacteria</taxon>
        <taxon>Campylobacterales</taxon>
        <taxon>Helicobacteraceae</taxon>
        <taxon>Wolinella</taxon>
    </lineage>
</organism>
<feature type="chain" id="PRO_0000094371" description="Elongation factor P">
    <location>
        <begin position="1"/>
        <end position="187"/>
    </location>
</feature>
<reference key="1">
    <citation type="journal article" date="2003" name="Proc. Natl. Acad. Sci. U.S.A.">
        <title>Complete genome sequence and analysis of Wolinella succinogenes.</title>
        <authorList>
            <person name="Baar C."/>
            <person name="Eppinger M."/>
            <person name="Raddatz G."/>
            <person name="Simon J."/>
            <person name="Lanz C."/>
            <person name="Klimmek O."/>
            <person name="Nandakumar R."/>
            <person name="Gross R."/>
            <person name="Rosinus A."/>
            <person name="Keller H."/>
            <person name="Jagtap P."/>
            <person name="Linke B."/>
            <person name="Meyer F."/>
            <person name="Lederer H."/>
            <person name="Schuster S.C."/>
        </authorList>
    </citation>
    <scope>NUCLEOTIDE SEQUENCE [LARGE SCALE GENOMIC DNA]</scope>
    <source>
        <strain>ATCC 29543 / DSM 1740 / CCUG 13145 / JCM 31913 / LMG 7466 / NCTC 11488 / FDC 602W</strain>
    </source>
</reference>